<reference key="1">
    <citation type="journal article" date="1999" name="Nat. Genet.">
        <title>Comparative genomes of Chlamydia pneumoniae and C. trachomatis.</title>
        <authorList>
            <person name="Kalman S."/>
            <person name="Mitchell W.P."/>
            <person name="Marathe R."/>
            <person name="Lammel C.J."/>
            <person name="Fan J."/>
            <person name="Hyman R.W."/>
            <person name="Olinger L."/>
            <person name="Grimwood J."/>
            <person name="Davis R.W."/>
            <person name="Stephens R.S."/>
        </authorList>
    </citation>
    <scope>NUCLEOTIDE SEQUENCE [LARGE SCALE GENOMIC DNA]</scope>
    <source>
        <strain>CWL029</strain>
    </source>
</reference>
<reference key="2">
    <citation type="journal article" date="2000" name="Nucleic Acids Res.">
        <title>Genome sequences of Chlamydia trachomatis MoPn and Chlamydia pneumoniae AR39.</title>
        <authorList>
            <person name="Read T.D."/>
            <person name="Brunham R.C."/>
            <person name="Shen C."/>
            <person name="Gill S.R."/>
            <person name="Heidelberg J.F."/>
            <person name="White O."/>
            <person name="Hickey E.K."/>
            <person name="Peterson J.D."/>
            <person name="Utterback T.R."/>
            <person name="Berry K.J."/>
            <person name="Bass S."/>
            <person name="Linher K.D."/>
            <person name="Weidman J.F."/>
            <person name="Khouri H.M."/>
            <person name="Craven B."/>
            <person name="Bowman C."/>
            <person name="Dodson R.J."/>
            <person name="Gwinn M.L."/>
            <person name="Nelson W.C."/>
            <person name="DeBoy R.T."/>
            <person name="Kolonay J.F."/>
            <person name="McClarty G."/>
            <person name="Salzberg S.L."/>
            <person name="Eisen J.A."/>
            <person name="Fraser C.M."/>
        </authorList>
    </citation>
    <scope>NUCLEOTIDE SEQUENCE [LARGE SCALE GENOMIC DNA]</scope>
    <source>
        <strain>AR39</strain>
    </source>
</reference>
<reference key="3">
    <citation type="journal article" date="2000" name="Nucleic Acids Res.">
        <title>Comparison of whole genome sequences of Chlamydia pneumoniae J138 from Japan and CWL029 from USA.</title>
        <authorList>
            <person name="Shirai M."/>
            <person name="Hirakawa H."/>
            <person name="Kimoto M."/>
            <person name="Tabuchi M."/>
            <person name="Kishi F."/>
            <person name="Ouchi K."/>
            <person name="Shiba T."/>
            <person name="Ishii K."/>
            <person name="Hattori M."/>
            <person name="Kuhara S."/>
            <person name="Nakazawa T."/>
        </authorList>
    </citation>
    <scope>NUCLEOTIDE SEQUENCE [LARGE SCALE GENOMIC DNA]</scope>
    <source>
        <strain>J138</strain>
    </source>
</reference>
<reference key="4">
    <citation type="submission" date="2002-05" db="EMBL/GenBank/DDBJ databases">
        <title>The genome sequence of Chlamydia pneumoniae TW183 and comparison with other Chlamydia strains based on whole genome sequence analysis.</title>
        <authorList>
            <person name="Geng M.M."/>
            <person name="Schuhmacher A."/>
            <person name="Muehldorfer I."/>
            <person name="Bensch K.W."/>
            <person name="Schaefer K.P."/>
            <person name="Schneider S."/>
            <person name="Pohl T."/>
            <person name="Essig A."/>
            <person name="Marre R."/>
            <person name="Melchers K."/>
        </authorList>
    </citation>
    <scope>NUCLEOTIDE SEQUENCE [LARGE SCALE GENOMIC DNA]</scope>
    <source>
        <strain>TW-183</strain>
    </source>
</reference>
<proteinExistence type="inferred from homology"/>
<name>3MGH_CHLPN</name>
<dbReference type="EC" id="3.2.2.-" evidence="1"/>
<dbReference type="EMBL" id="AE001363">
    <property type="protein sequence ID" value="AAD18645.1"/>
    <property type="molecule type" value="Genomic_DNA"/>
</dbReference>
<dbReference type="EMBL" id="AE002161">
    <property type="protein sequence ID" value="AAF38112.1"/>
    <property type="molecule type" value="Genomic_DNA"/>
</dbReference>
<dbReference type="EMBL" id="BA000008">
    <property type="protein sequence ID" value="BAA98711.1"/>
    <property type="molecule type" value="Genomic_DNA"/>
</dbReference>
<dbReference type="EMBL" id="AE009440">
    <property type="protein sequence ID" value="AAP98455.1"/>
    <property type="molecule type" value="Genomic_DNA"/>
</dbReference>
<dbReference type="PIR" id="C72071">
    <property type="entry name" value="C72071"/>
</dbReference>
<dbReference type="PIR" id="E86553">
    <property type="entry name" value="E86553"/>
</dbReference>
<dbReference type="RefSeq" id="NP_224701.1">
    <property type="nucleotide sequence ID" value="NC_000922.1"/>
</dbReference>
<dbReference type="RefSeq" id="WP_010883143.1">
    <property type="nucleotide sequence ID" value="NZ_LN847257.1"/>
</dbReference>
<dbReference type="SMR" id="Q9Z847"/>
<dbReference type="STRING" id="406984.CPK_ORF01021"/>
<dbReference type="GeneID" id="45050548"/>
<dbReference type="KEGG" id="cpa:CP_0248"/>
<dbReference type="KEGG" id="cpj:CPj0505"/>
<dbReference type="KEGG" id="cpn:CPn_0505"/>
<dbReference type="KEGG" id="cpt:CpB0526"/>
<dbReference type="PATRIC" id="fig|115713.3.peg.564"/>
<dbReference type="eggNOG" id="COG2094">
    <property type="taxonomic scope" value="Bacteria"/>
</dbReference>
<dbReference type="HOGENOM" id="CLU_060471_2_1_0"/>
<dbReference type="OrthoDB" id="9794313at2"/>
<dbReference type="Proteomes" id="UP000000583">
    <property type="component" value="Chromosome"/>
</dbReference>
<dbReference type="Proteomes" id="UP000000801">
    <property type="component" value="Chromosome"/>
</dbReference>
<dbReference type="GO" id="GO:0003905">
    <property type="term" value="F:alkylbase DNA N-glycosylase activity"/>
    <property type="evidence" value="ECO:0007669"/>
    <property type="project" value="InterPro"/>
</dbReference>
<dbReference type="GO" id="GO:0003677">
    <property type="term" value="F:DNA binding"/>
    <property type="evidence" value="ECO:0007669"/>
    <property type="project" value="InterPro"/>
</dbReference>
<dbReference type="GO" id="GO:0006284">
    <property type="term" value="P:base-excision repair"/>
    <property type="evidence" value="ECO:0007669"/>
    <property type="project" value="InterPro"/>
</dbReference>
<dbReference type="CDD" id="cd00540">
    <property type="entry name" value="AAG"/>
    <property type="match status" value="1"/>
</dbReference>
<dbReference type="FunFam" id="3.10.300.10:FF:000001">
    <property type="entry name" value="Putative 3-methyladenine DNA glycosylase"/>
    <property type="match status" value="1"/>
</dbReference>
<dbReference type="Gene3D" id="3.10.300.10">
    <property type="entry name" value="Methylpurine-DNA glycosylase (MPG)"/>
    <property type="match status" value="1"/>
</dbReference>
<dbReference type="HAMAP" id="MF_00527">
    <property type="entry name" value="3MGH"/>
    <property type="match status" value="1"/>
</dbReference>
<dbReference type="InterPro" id="IPR011034">
    <property type="entry name" value="Formyl_transferase-like_C_sf"/>
</dbReference>
<dbReference type="InterPro" id="IPR003180">
    <property type="entry name" value="MPG"/>
</dbReference>
<dbReference type="InterPro" id="IPR036995">
    <property type="entry name" value="MPG_sf"/>
</dbReference>
<dbReference type="NCBIfam" id="TIGR00567">
    <property type="entry name" value="3mg"/>
    <property type="match status" value="1"/>
</dbReference>
<dbReference type="PANTHER" id="PTHR10429">
    <property type="entry name" value="DNA-3-METHYLADENINE GLYCOSYLASE"/>
    <property type="match status" value="1"/>
</dbReference>
<dbReference type="PANTHER" id="PTHR10429:SF0">
    <property type="entry name" value="DNA-3-METHYLADENINE GLYCOSYLASE"/>
    <property type="match status" value="1"/>
</dbReference>
<dbReference type="Pfam" id="PF02245">
    <property type="entry name" value="Pur_DNA_glyco"/>
    <property type="match status" value="1"/>
</dbReference>
<dbReference type="SUPFAM" id="SSF50486">
    <property type="entry name" value="FMT C-terminal domain-like"/>
    <property type="match status" value="1"/>
</dbReference>
<comment type="similarity">
    <text evidence="1">Belongs to the DNA glycosylase MPG family.</text>
</comment>
<evidence type="ECO:0000255" key="1">
    <source>
        <dbReference type="HAMAP-Rule" id="MF_00527"/>
    </source>
</evidence>
<accession>Q9Z847</accession>
<protein>
    <recommendedName>
        <fullName evidence="1">Putative 3-methyladenine DNA glycosylase</fullName>
        <ecNumber evidence="1">3.2.2.-</ecNumber>
    </recommendedName>
</protein>
<feature type="chain" id="PRO_0000100077" description="Putative 3-methyladenine DNA glycosylase">
    <location>
        <begin position="1"/>
        <end position="196"/>
    </location>
</feature>
<sequence length="196" mass="22291">MLQEHFFLSEDVITLAQQLLGHKLITTHEGLITSGYIVETEAYRGPDDKACHAYNYRKTQRNRAMYLKGGSAYLYRCYGMHHLLNVVTGPEDIPHAVLIRAILPDQGKELMIQRRQWRDKPPHLLTNGPGKVCQALGISLENNRQRLNTPALYISKEKISGTLTATARIGIDYAQEYRDVPWRFLLSPEDSGKVLS</sequence>
<organism>
    <name type="scientific">Chlamydia pneumoniae</name>
    <name type="common">Chlamydophila pneumoniae</name>
    <dbReference type="NCBI Taxonomy" id="83558"/>
    <lineage>
        <taxon>Bacteria</taxon>
        <taxon>Pseudomonadati</taxon>
        <taxon>Chlamydiota</taxon>
        <taxon>Chlamydiia</taxon>
        <taxon>Chlamydiales</taxon>
        <taxon>Chlamydiaceae</taxon>
        <taxon>Chlamydia/Chlamydophila group</taxon>
        <taxon>Chlamydia</taxon>
    </lineage>
</organism>
<gene>
    <name type="ordered locus">CPn_0505</name>
    <name type="ordered locus">CP_0248</name>
    <name type="ordered locus">CPj0505</name>
    <name type="ordered locus">CpB0526</name>
</gene>
<keyword id="KW-0227">DNA damage</keyword>
<keyword id="KW-0234">DNA repair</keyword>
<keyword id="KW-0378">Hydrolase</keyword>